<gene>
    <name evidence="1" type="primary">pyrC</name>
    <name type="ordered locus">str1054</name>
</gene>
<keyword id="KW-0378">Hydrolase</keyword>
<keyword id="KW-0479">Metal-binding</keyword>
<keyword id="KW-0665">Pyrimidine biosynthesis</keyword>
<keyword id="KW-0862">Zinc</keyword>
<protein>
    <recommendedName>
        <fullName evidence="1">Dihydroorotase</fullName>
        <shortName evidence="1">DHOase</shortName>
        <ecNumber evidence="1">3.5.2.3</ecNumber>
    </recommendedName>
</protein>
<accession>Q5LZQ6</accession>
<proteinExistence type="inferred from homology"/>
<sequence length="422" mass="44949">MLLIKNGRVVDPKSGLDTQADVLVDGKKVVKIAENIDAGDAQVIDATGLVVAPGLVDIHVHFREPGQTHKEDIHTGALAAAAGGFTTVVMMANTNPTISDKETLKEVLTSAAKENIHIKSVATITKNFDGENITDFKGLLEAGAVGFSDDGIPLTNAGIVKKAMELAKENNTFISLHEEDPDLNGVLGFNENIAKKEFHICGATGVAEYSMIARDVMVAYDTQAHVHIQHLSKAESVKVVEFAQKLGAQVTAEVAPQHFSKTEDLLLSKGANAKMNPPLRLESDRQAVIEGLKSGVISVIATDHAPHHADEKNVADVTKAPSGMTGLETSLSLGLTYLVEAGHLSLTELLKLMTSNPSDLYGFDAGYLAENGPADLVIFADKEKRQVTADFKSKAANSPFVGEELTGSVKYTICDGEIVYQV</sequence>
<dbReference type="EC" id="3.5.2.3" evidence="1"/>
<dbReference type="EMBL" id="CP000024">
    <property type="protein sequence ID" value="AAV62631.1"/>
    <property type="molecule type" value="Genomic_DNA"/>
</dbReference>
<dbReference type="RefSeq" id="WP_011226005.1">
    <property type="nucleotide sequence ID" value="NC_006449.1"/>
</dbReference>
<dbReference type="SMR" id="Q5LZQ6"/>
<dbReference type="KEGG" id="stc:str1054"/>
<dbReference type="HOGENOM" id="CLU_015572_1_0_9"/>
<dbReference type="UniPathway" id="UPA00070">
    <property type="reaction ID" value="UER00117"/>
</dbReference>
<dbReference type="GO" id="GO:0005737">
    <property type="term" value="C:cytoplasm"/>
    <property type="evidence" value="ECO:0007669"/>
    <property type="project" value="TreeGrafter"/>
</dbReference>
<dbReference type="GO" id="GO:0004038">
    <property type="term" value="F:allantoinase activity"/>
    <property type="evidence" value="ECO:0007669"/>
    <property type="project" value="TreeGrafter"/>
</dbReference>
<dbReference type="GO" id="GO:0004151">
    <property type="term" value="F:dihydroorotase activity"/>
    <property type="evidence" value="ECO:0007669"/>
    <property type="project" value="UniProtKB-UniRule"/>
</dbReference>
<dbReference type="GO" id="GO:0008270">
    <property type="term" value="F:zinc ion binding"/>
    <property type="evidence" value="ECO:0007669"/>
    <property type="project" value="UniProtKB-UniRule"/>
</dbReference>
<dbReference type="GO" id="GO:0044205">
    <property type="term" value="P:'de novo' UMP biosynthetic process"/>
    <property type="evidence" value="ECO:0007669"/>
    <property type="project" value="UniProtKB-UniRule"/>
</dbReference>
<dbReference type="GO" id="GO:0006145">
    <property type="term" value="P:purine nucleobase catabolic process"/>
    <property type="evidence" value="ECO:0007669"/>
    <property type="project" value="TreeGrafter"/>
</dbReference>
<dbReference type="CDD" id="cd01317">
    <property type="entry name" value="DHOase_IIa"/>
    <property type="match status" value="1"/>
</dbReference>
<dbReference type="Gene3D" id="3.20.20.140">
    <property type="entry name" value="Metal-dependent hydrolases"/>
    <property type="match status" value="1"/>
</dbReference>
<dbReference type="HAMAP" id="MF_00220_B">
    <property type="entry name" value="PyrC_classI_B"/>
    <property type="match status" value="1"/>
</dbReference>
<dbReference type="InterPro" id="IPR006680">
    <property type="entry name" value="Amidohydro-rel"/>
</dbReference>
<dbReference type="InterPro" id="IPR004722">
    <property type="entry name" value="DHOase"/>
</dbReference>
<dbReference type="InterPro" id="IPR050138">
    <property type="entry name" value="DHOase/Allantoinase_Hydrolase"/>
</dbReference>
<dbReference type="InterPro" id="IPR002195">
    <property type="entry name" value="Dihydroorotase_CS"/>
</dbReference>
<dbReference type="InterPro" id="IPR011059">
    <property type="entry name" value="Metal-dep_hydrolase_composite"/>
</dbReference>
<dbReference type="InterPro" id="IPR032466">
    <property type="entry name" value="Metal_Hydrolase"/>
</dbReference>
<dbReference type="NCBIfam" id="NF006839">
    <property type="entry name" value="PRK09357.1-4"/>
    <property type="match status" value="1"/>
</dbReference>
<dbReference type="NCBIfam" id="TIGR00857">
    <property type="entry name" value="pyrC_multi"/>
    <property type="match status" value="1"/>
</dbReference>
<dbReference type="PANTHER" id="PTHR43668">
    <property type="entry name" value="ALLANTOINASE"/>
    <property type="match status" value="1"/>
</dbReference>
<dbReference type="PANTHER" id="PTHR43668:SF2">
    <property type="entry name" value="ALLANTOINASE"/>
    <property type="match status" value="1"/>
</dbReference>
<dbReference type="Pfam" id="PF01979">
    <property type="entry name" value="Amidohydro_1"/>
    <property type="match status" value="1"/>
</dbReference>
<dbReference type="SUPFAM" id="SSF51338">
    <property type="entry name" value="Composite domain of metallo-dependent hydrolases"/>
    <property type="match status" value="1"/>
</dbReference>
<dbReference type="SUPFAM" id="SSF51556">
    <property type="entry name" value="Metallo-dependent hydrolases"/>
    <property type="match status" value="1"/>
</dbReference>
<dbReference type="PROSITE" id="PS00482">
    <property type="entry name" value="DIHYDROOROTASE_1"/>
    <property type="match status" value="1"/>
</dbReference>
<dbReference type="PROSITE" id="PS00483">
    <property type="entry name" value="DIHYDROOROTASE_2"/>
    <property type="match status" value="1"/>
</dbReference>
<comment type="function">
    <text evidence="1">Catalyzes the reversible cyclization of carbamoyl aspartate to dihydroorotate.</text>
</comment>
<comment type="catalytic activity">
    <reaction evidence="1">
        <text>(S)-dihydroorotate + H2O = N-carbamoyl-L-aspartate + H(+)</text>
        <dbReference type="Rhea" id="RHEA:24296"/>
        <dbReference type="ChEBI" id="CHEBI:15377"/>
        <dbReference type="ChEBI" id="CHEBI:15378"/>
        <dbReference type="ChEBI" id="CHEBI:30864"/>
        <dbReference type="ChEBI" id="CHEBI:32814"/>
        <dbReference type="EC" id="3.5.2.3"/>
    </reaction>
</comment>
<comment type="cofactor">
    <cofactor evidence="1">
        <name>Zn(2+)</name>
        <dbReference type="ChEBI" id="CHEBI:29105"/>
    </cofactor>
    <text evidence="1">Binds 2 Zn(2+) ions per subunit.</text>
</comment>
<comment type="pathway">
    <text evidence="1">Pyrimidine metabolism; UMP biosynthesis via de novo pathway; (S)-dihydroorotate from bicarbonate: step 3/3.</text>
</comment>
<comment type="similarity">
    <text evidence="1">Belongs to the metallo-dependent hydrolases superfamily. DHOase family. Class I DHOase subfamily.</text>
</comment>
<reference key="1">
    <citation type="journal article" date="2004" name="Nat. Biotechnol.">
        <title>Complete sequence and comparative genome analysis of the dairy bacterium Streptococcus thermophilus.</title>
        <authorList>
            <person name="Bolotin A."/>
            <person name="Quinquis B."/>
            <person name="Renault P."/>
            <person name="Sorokin A."/>
            <person name="Ehrlich S.D."/>
            <person name="Kulakauskas S."/>
            <person name="Lapidus A."/>
            <person name="Goltsman E."/>
            <person name="Mazur M."/>
            <person name="Pusch G.D."/>
            <person name="Fonstein M."/>
            <person name="Overbeek R."/>
            <person name="Kyprides N."/>
            <person name="Purnelle B."/>
            <person name="Prozzi D."/>
            <person name="Ngui K."/>
            <person name="Masuy D."/>
            <person name="Hancy F."/>
            <person name="Burteau S."/>
            <person name="Boutry M."/>
            <person name="Delcour J."/>
            <person name="Goffeau A."/>
            <person name="Hols P."/>
        </authorList>
    </citation>
    <scope>NUCLEOTIDE SEQUENCE [LARGE SCALE GENOMIC DNA]</scope>
    <source>
        <strain>CNRZ 1066</strain>
    </source>
</reference>
<organism>
    <name type="scientific">Streptococcus thermophilus (strain CNRZ 1066)</name>
    <dbReference type="NCBI Taxonomy" id="299768"/>
    <lineage>
        <taxon>Bacteria</taxon>
        <taxon>Bacillati</taxon>
        <taxon>Bacillota</taxon>
        <taxon>Bacilli</taxon>
        <taxon>Lactobacillales</taxon>
        <taxon>Streptococcaceae</taxon>
        <taxon>Streptococcus</taxon>
    </lineage>
</organism>
<evidence type="ECO:0000255" key="1">
    <source>
        <dbReference type="HAMAP-Rule" id="MF_00220"/>
    </source>
</evidence>
<name>PYRC_STRT1</name>
<feature type="chain" id="PRO_0000147261" description="Dihydroorotase">
    <location>
        <begin position="1"/>
        <end position="422"/>
    </location>
</feature>
<feature type="active site" evidence="1">
    <location>
        <position position="303"/>
    </location>
</feature>
<feature type="binding site" evidence="1">
    <location>
        <position position="59"/>
    </location>
    <ligand>
        <name>Zn(2+)</name>
        <dbReference type="ChEBI" id="CHEBI:29105"/>
        <label>1</label>
    </ligand>
</feature>
<feature type="binding site" evidence="1">
    <location>
        <begin position="61"/>
        <end position="63"/>
    </location>
    <ligand>
        <name>substrate</name>
    </ligand>
</feature>
<feature type="binding site" evidence="1">
    <location>
        <position position="61"/>
    </location>
    <ligand>
        <name>Zn(2+)</name>
        <dbReference type="ChEBI" id="CHEBI:29105"/>
        <label>1</label>
    </ligand>
</feature>
<feature type="binding site" evidence="1">
    <location>
        <position position="93"/>
    </location>
    <ligand>
        <name>substrate</name>
    </ligand>
</feature>
<feature type="binding site" evidence="1">
    <location>
        <position position="150"/>
    </location>
    <ligand>
        <name>Zn(2+)</name>
        <dbReference type="ChEBI" id="CHEBI:29105"/>
        <label>1</label>
    </ligand>
</feature>
<feature type="binding site" evidence="1">
    <location>
        <position position="150"/>
    </location>
    <ligand>
        <name>Zn(2+)</name>
        <dbReference type="ChEBI" id="CHEBI:29105"/>
        <label>2</label>
    </ligand>
</feature>
<feature type="binding site" evidence="1">
    <location>
        <position position="177"/>
    </location>
    <ligand>
        <name>Zn(2+)</name>
        <dbReference type="ChEBI" id="CHEBI:29105"/>
        <label>2</label>
    </ligand>
</feature>
<feature type="binding site" evidence="1">
    <location>
        <position position="230"/>
    </location>
    <ligand>
        <name>Zn(2+)</name>
        <dbReference type="ChEBI" id="CHEBI:29105"/>
        <label>2</label>
    </ligand>
</feature>
<feature type="binding site" evidence="1">
    <location>
        <position position="276"/>
    </location>
    <ligand>
        <name>substrate</name>
    </ligand>
</feature>
<feature type="binding site" evidence="1">
    <location>
        <position position="303"/>
    </location>
    <ligand>
        <name>Zn(2+)</name>
        <dbReference type="ChEBI" id="CHEBI:29105"/>
        <label>1</label>
    </ligand>
</feature>
<feature type="binding site" evidence="1">
    <location>
        <position position="307"/>
    </location>
    <ligand>
        <name>substrate</name>
    </ligand>
</feature>